<dbReference type="EMBL" id="FO081565">
    <property type="protein sequence ID" value="CCD72450.1"/>
    <property type="molecule type" value="Genomic_DNA"/>
</dbReference>
<dbReference type="PIR" id="T32203">
    <property type="entry name" value="T32203"/>
</dbReference>
<dbReference type="RefSeq" id="NP_503349.1">
    <property type="nucleotide sequence ID" value="NM_070948.1"/>
</dbReference>
<dbReference type="PaxDb" id="6239-T02B11.5"/>
<dbReference type="EnsemblMetazoa" id="T02B11.5.1">
    <property type="protein sequence ID" value="T02B11.5.1"/>
    <property type="gene ID" value="WBGene00005622"/>
</dbReference>
<dbReference type="GeneID" id="191945"/>
<dbReference type="KEGG" id="cel:CELE_T02B11.5"/>
<dbReference type="UCSC" id="T02B11.5">
    <property type="organism name" value="c. elegans"/>
</dbReference>
<dbReference type="AGR" id="WB:WBGene00005622"/>
<dbReference type="CTD" id="191945"/>
<dbReference type="WormBase" id="T02B11.5">
    <property type="protein sequence ID" value="CE26471"/>
    <property type="gene ID" value="WBGene00005622"/>
    <property type="gene designation" value="srj-38"/>
</dbReference>
<dbReference type="eggNOG" id="ENOG502R3HH">
    <property type="taxonomic scope" value="Eukaryota"/>
</dbReference>
<dbReference type="GeneTree" id="ENSGT00970000195856"/>
<dbReference type="HOGENOM" id="CLU_036335_0_0_1"/>
<dbReference type="InParanoid" id="O16975"/>
<dbReference type="PhylomeDB" id="O16975"/>
<dbReference type="PRO" id="PR:O16975"/>
<dbReference type="Proteomes" id="UP000001940">
    <property type="component" value="Chromosome V"/>
</dbReference>
<dbReference type="GO" id="GO:0016020">
    <property type="term" value="C:membrane"/>
    <property type="evidence" value="ECO:0007669"/>
    <property type="project" value="UniProtKB-SubCell"/>
</dbReference>
<dbReference type="InterPro" id="IPR019423">
    <property type="entry name" value="7TM_GPCR_serpentine_rcpt_Srj"/>
</dbReference>
<dbReference type="PANTHER" id="PTHR45907">
    <property type="entry name" value="SERPENTINE RECEPTOR, CLASS J"/>
    <property type="match status" value="1"/>
</dbReference>
<dbReference type="PANTHER" id="PTHR45907:SF24">
    <property type="entry name" value="SERPENTINE RECEPTOR, CLASS J-RELATED"/>
    <property type="match status" value="1"/>
</dbReference>
<dbReference type="Pfam" id="PF10319">
    <property type="entry name" value="7TM_GPCR_Srj"/>
    <property type="match status" value="1"/>
</dbReference>
<dbReference type="SUPFAM" id="SSF81321">
    <property type="entry name" value="Family A G protein-coupled receptor-like"/>
    <property type="match status" value="1"/>
</dbReference>
<sequence length="330" mass="38752">MLDDWIYIFLPRISCALAWVVNPIFVYFIFTEKSQTFGNYRYLLLFFALFNLLYSVVNVVVPIDIHNYRYCFFLILRHGWFVEISDFHYHMAAGRCSLVASSYALLLVHFIYRFLVIYDSSLTRLHFHWYMTGSLLLSVAYFVAWQTICWFLGYASVEMRQYVREEIRRTYGRDSMDFNMIGTLYDEASYEAKFKSWLATIIWSSISVASISAYMVLALLTIHKLKKMSCNASKKTSKFQFELLRALIVQTLIPIVISFSPCLLCWYTPIFGIQLPREFNYFEVGALGLFSFVDPIAIILCLPIFRHRISNFWKTSTTSLEEPSTKVRNI</sequence>
<protein>
    <recommendedName>
        <fullName>Serpentine receptor class J-38</fullName>
        <shortName>Protein srj-38</shortName>
    </recommendedName>
</protein>
<name>SRJ38_CAEEL</name>
<organism>
    <name type="scientific">Caenorhabditis elegans</name>
    <dbReference type="NCBI Taxonomy" id="6239"/>
    <lineage>
        <taxon>Eukaryota</taxon>
        <taxon>Metazoa</taxon>
        <taxon>Ecdysozoa</taxon>
        <taxon>Nematoda</taxon>
        <taxon>Chromadorea</taxon>
        <taxon>Rhabditida</taxon>
        <taxon>Rhabditina</taxon>
        <taxon>Rhabditomorpha</taxon>
        <taxon>Rhabditoidea</taxon>
        <taxon>Rhabditidae</taxon>
        <taxon>Peloderinae</taxon>
        <taxon>Caenorhabditis</taxon>
    </lineage>
</organism>
<accession>O16975</accession>
<proteinExistence type="inferred from homology"/>
<keyword id="KW-0472">Membrane</keyword>
<keyword id="KW-1185">Reference proteome</keyword>
<keyword id="KW-0812">Transmembrane</keyword>
<keyword id="KW-1133">Transmembrane helix</keyword>
<evidence type="ECO:0000255" key="1"/>
<evidence type="ECO:0000305" key="2"/>
<reference key="1">
    <citation type="journal article" date="1998" name="Science">
        <title>Genome sequence of the nematode C. elegans: a platform for investigating biology.</title>
        <authorList>
            <consortium name="The C. elegans sequencing consortium"/>
        </authorList>
    </citation>
    <scope>NUCLEOTIDE SEQUENCE [LARGE SCALE GENOMIC DNA]</scope>
    <source>
        <strain>Bristol N2</strain>
    </source>
</reference>
<comment type="subcellular location">
    <subcellularLocation>
        <location evidence="2">Membrane</location>
        <topology evidence="2">Multi-pass membrane protein</topology>
    </subcellularLocation>
</comment>
<comment type="similarity">
    <text evidence="2">Belongs to the nematode receptor-like protein srj family.</text>
</comment>
<feature type="chain" id="PRO_0000104576" description="Serpentine receptor class J-38">
    <location>
        <begin position="1"/>
        <end position="330"/>
    </location>
</feature>
<feature type="transmembrane region" description="Helical" evidence="1">
    <location>
        <begin position="6"/>
        <end position="26"/>
    </location>
</feature>
<feature type="transmembrane region" description="Helical" evidence="1">
    <location>
        <begin position="43"/>
        <end position="63"/>
    </location>
</feature>
<feature type="transmembrane region" description="Helical" evidence="1">
    <location>
        <begin position="98"/>
        <end position="118"/>
    </location>
</feature>
<feature type="transmembrane region" description="Helical" evidence="1">
    <location>
        <begin position="135"/>
        <end position="155"/>
    </location>
</feature>
<feature type="transmembrane region" description="Helical" evidence="1">
    <location>
        <begin position="200"/>
        <end position="220"/>
    </location>
</feature>
<feature type="transmembrane region" description="Helical" evidence="1">
    <location>
        <begin position="253"/>
        <end position="273"/>
    </location>
</feature>
<feature type="transmembrane region" description="Helical" evidence="1">
    <location>
        <begin position="285"/>
        <end position="305"/>
    </location>
</feature>
<gene>
    <name type="primary">srj-38</name>
    <name type="ORF">T02B11.5</name>
</gene>